<name>UVRA_SERMA</name>
<organism>
    <name type="scientific">Serratia marcescens</name>
    <dbReference type="NCBI Taxonomy" id="615"/>
    <lineage>
        <taxon>Bacteria</taxon>
        <taxon>Pseudomonadati</taxon>
        <taxon>Pseudomonadota</taxon>
        <taxon>Gammaproteobacteria</taxon>
        <taxon>Enterobacterales</taxon>
        <taxon>Yersiniaceae</taxon>
        <taxon>Serratia</taxon>
    </lineage>
</organism>
<feature type="chain" id="PRO_0000093087" description="UvrABC system protein A">
    <location>
        <begin position="1"/>
        <end position="74" status="greater than"/>
    </location>
</feature>
<feature type="binding site" evidence="2">
    <location>
        <begin position="31"/>
        <end position="38"/>
    </location>
    <ligand>
        <name>ATP</name>
        <dbReference type="ChEBI" id="CHEBI:30616"/>
    </ligand>
</feature>
<feature type="non-terminal residue">
    <location>
        <position position="74"/>
    </location>
</feature>
<protein>
    <recommendedName>
        <fullName>UvrABC system protein A</fullName>
        <shortName>UvrA protein</shortName>
    </recommendedName>
    <alternativeName>
        <fullName>Excinuclease ABC subunit A</fullName>
    </alternativeName>
</protein>
<sequence>MDNIEVRGARTHNLKNINLIIPRDKLIVVTGLSGSGKSSLAFDTLYAEGQRRYVESLSAYARQFLSLMEKPDVD</sequence>
<proteinExistence type="inferred from homology"/>
<keyword id="KW-0067">ATP-binding</keyword>
<keyword id="KW-0963">Cytoplasm</keyword>
<keyword id="KW-0227">DNA damage</keyword>
<keyword id="KW-0228">DNA excision</keyword>
<keyword id="KW-0234">DNA repair</keyword>
<keyword id="KW-0238">DNA-binding</keyword>
<keyword id="KW-0267">Excision nuclease</keyword>
<keyword id="KW-0547">Nucleotide-binding</keyword>
<keyword id="KW-0677">Repeat</keyword>
<keyword id="KW-0742">SOS response</keyword>
<comment type="function">
    <text evidence="1">The UvrABC repair system catalyzes the recognition and processing of DNA lesions. UvrA is an ATPase and a DNA-binding protein. A damage recognition complex composed of 2 UvrA and 2 UvrB subunits scans DNA for abnormalities. When the presence of a lesion has been verified by UvrB, the UvrA molecules dissociate (By similarity).</text>
</comment>
<comment type="subunit">
    <text evidence="1">Forms a heterotetramer with UvrB during the search for lesions.</text>
</comment>
<comment type="subcellular location">
    <subcellularLocation>
        <location evidence="1">Cytoplasm</location>
    </subcellularLocation>
</comment>
<comment type="similarity">
    <text evidence="3">Belongs to the ABC transporter superfamily. UvrA family.</text>
</comment>
<dbReference type="EMBL" id="X65080">
    <property type="protein sequence ID" value="CAA46207.1"/>
    <property type="molecule type" value="Genomic_DNA"/>
</dbReference>
<dbReference type="PIR" id="PN0540">
    <property type="entry name" value="PN0540"/>
</dbReference>
<dbReference type="SMR" id="P25735"/>
<dbReference type="STRING" id="273526.SMDB11_3694"/>
<dbReference type="GO" id="GO:0005737">
    <property type="term" value="C:cytoplasm"/>
    <property type="evidence" value="ECO:0007669"/>
    <property type="project" value="UniProtKB-SubCell"/>
</dbReference>
<dbReference type="GO" id="GO:0005524">
    <property type="term" value="F:ATP binding"/>
    <property type="evidence" value="ECO:0007669"/>
    <property type="project" value="UniProtKB-KW"/>
</dbReference>
<dbReference type="GO" id="GO:0003677">
    <property type="term" value="F:DNA binding"/>
    <property type="evidence" value="ECO:0007669"/>
    <property type="project" value="UniProtKB-KW"/>
</dbReference>
<dbReference type="GO" id="GO:0004518">
    <property type="term" value="F:nuclease activity"/>
    <property type="evidence" value="ECO:0007669"/>
    <property type="project" value="UniProtKB-KW"/>
</dbReference>
<dbReference type="GO" id="GO:0006281">
    <property type="term" value="P:DNA repair"/>
    <property type="evidence" value="ECO:0007669"/>
    <property type="project" value="UniProtKB-KW"/>
</dbReference>
<dbReference type="GO" id="GO:0009432">
    <property type="term" value="P:SOS response"/>
    <property type="evidence" value="ECO:0007669"/>
    <property type="project" value="UniProtKB-KW"/>
</dbReference>
<dbReference type="Gene3D" id="3.40.50.300">
    <property type="entry name" value="P-loop containing nucleotide triphosphate hydrolases"/>
    <property type="match status" value="1"/>
</dbReference>
<dbReference type="InterPro" id="IPR027417">
    <property type="entry name" value="P-loop_NTPase"/>
</dbReference>
<dbReference type="PANTHER" id="PTHR43152">
    <property type="entry name" value="UVRABC SYSTEM PROTEIN A"/>
    <property type="match status" value="1"/>
</dbReference>
<dbReference type="PANTHER" id="PTHR43152:SF3">
    <property type="entry name" value="UVRABC SYSTEM PROTEIN A"/>
    <property type="match status" value="1"/>
</dbReference>
<dbReference type="SUPFAM" id="SSF52540">
    <property type="entry name" value="P-loop containing nucleoside triphosphate hydrolases"/>
    <property type="match status" value="1"/>
</dbReference>
<accession>P25735</accession>
<gene>
    <name type="primary">uvrA</name>
</gene>
<evidence type="ECO:0000250" key="1"/>
<evidence type="ECO:0000255" key="2">
    <source>
        <dbReference type="PROSITE-ProRule" id="PRU00434"/>
    </source>
</evidence>
<evidence type="ECO:0000305" key="3"/>
<reference key="1">
    <citation type="journal article" date="1993" name="Gene">
        <title>Cloning and sequencing of the Serratia marcescens gene encoding a single-stranded DNA-binding protein (SSB) and its promoter region.</title>
        <authorList>
            <person name="de Vries J."/>
            <person name="Wackernagel W."/>
        </authorList>
    </citation>
    <scope>NUCLEOTIDE SEQUENCE [GENOMIC DNA]</scope>
    <source>
        <strain>Sr41</strain>
    </source>
</reference>